<organism>
    <name type="scientific">Mycolicibacterium paratuberculosis (strain ATCC BAA-968 / K-10)</name>
    <name type="common">Mycobacterium paratuberculosis</name>
    <dbReference type="NCBI Taxonomy" id="262316"/>
    <lineage>
        <taxon>Bacteria</taxon>
        <taxon>Bacillati</taxon>
        <taxon>Actinomycetota</taxon>
        <taxon>Actinomycetes</taxon>
        <taxon>Mycobacteriales</taxon>
        <taxon>Mycobacteriaceae</taxon>
        <taxon>Mycobacterium</taxon>
        <taxon>Mycobacterium avium complex (MAC)</taxon>
    </lineage>
</organism>
<proteinExistence type="inferred from homology"/>
<evidence type="ECO:0000255" key="1">
    <source>
        <dbReference type="HAMAP-Rule" id="MF_00421"/>
    </source>
</evidence>
<gene>
    <name evidence="1" type="primary">purQ</name>
    <name type="ordered locus">MAP_0626</name>
</gene>
<comment type="function">
    <text evidence="1">Part of the phosphoribosylformylglycinamidine synthase complex involved in the purines biosynthetic pathway. Catalyzes the ATP-dependent conversion of formylglycinamide ribonucleotide (FGAR) and glutamine to yield formylglycinamidine ribonucleotide (FGAM) and glutamate. The FGAM synthase complex is composed of three subunits. PurQ produces an ammonia molecule by converting glutamine to glutamate. PurL transfers the ammonia molecule to FGAR to form FGAM in an ATP-dependent manner. PurS interacts with PurQ and PurL and is thought to assist in the transfer of the ammonia molecule from PurQ to PurL.</text>
</comment>
<comment type="catalytic activity">
    <reaction evidence="1">
        <text>N(2)-formyl-N(1)-(5-phospho-beta-D-ribosyl)glycinamide + L-glutamine + ATP + H2O = 2-formamido-N(1)-(5-O-phospho-beta-D-ribosyl)acetamidine + L-glutamate + ADP + phosphate + H(+)</text>
        <dbReference type="Rhea" id="RHEA:17129"/>
        <dbReference type="ChEBI" id="CHEBI:15377"/>
        <dbReference type="ChEBI" id="CHEBI:15378"/>
        <dbReference type="ChEBI" id="CHEBI:29985"/>
        <dbReference type="ChEBI" id="CHEBI:30616"/>
        <dbReference type="ChEBI" id="CHEBI:43474"/>
        <dbReference type="ChEBI" id="CHEBI:58359"/>
        <dbReference type="ChEBI" id="CHEBI:147286"/>
        <dbReference type="ChEBI" id="CHEBI:147287"/>
        <dbReference type="ChEBI" id="CHEBI:456216"/>
        <dbReference type="EC" id="6.3.5.3"/>
    </reaction>
</comment>
<comment type="catalytic activity">
    <reaction evidence="1">
        <text>L-glutamine + H2O = L-glutamate + NH4(+)</text>
        <dbReference type="Rhea" id="RHEA:15889"/>
        <dbReference type="ChEBI" id="CHEBI:15377"/>
        <dbReference type="ChEBI" id="CHEBI:28938"/>
        <dbReference type="ChEBI" id="CHEBI:29985"/>
        <dbReference type="ChEBI" id="CHEBI:58359"/>
        <dbReference type="EC" id="3.5.1.2"/>
    </reaction>
</comment>
<comment type="pathway">
    <text evidence="1">Purine metabolism; IMP biosynthesis via de novo pathway; 5-amino-1-(5-phospho-D-ribosyl)imidazole from N(2)-formyl-N(1)-(5-phospho-D-ribosyl)glycinamide: step 1/2.</text>
</comment>
<comment type="subunit">
    <text evidence="1">Part of the FGAM synthase complex composed of 1 PurL, 1 PurQ and 2 PurS subunits.</text>
</comment>
<comment type="subcellular location">
    <subcellularLocation>
        <location evidence="1">Cytoplasm</location>
    </subcellularLocation>
</comment>
<dbReference type="EC" id="6.3.5.3" evidence="1"/>
<dbReference type="EC" id="3.5.1.2" evidence="1"/>
<dbReference type="EMBL" id="AE016958">
    <property type="protein sequence ID" value="AAS02943.1"/>
    <property type="molecule type" value="Genomic_DNA"/>
</dbReference>
<dbReference type="RefSeq" id="WP_003875787.1">
    <property type="nucleotide sequence ID" value="NZ_CP106873.1"/>
</dbReference>
<dbReference type="SMR" id="Q743F9"/>
<dbReference type="STRING" id="262316.MAP_0626"/>
<dbReference type="KEGG" id="mpa:MAP_0626"/>
<dbReference type="eggNOG" id="COG0047">
    <property type="taxonomic scope" value="Bacteria"/>
</dbReference>
<dbReference type="HOGENOM" id="CLU_001031_3_1_11"/>
<dbReference type="UniPathway" id="UPA00074">
    <property type="reaction ID" value="UER00128"/>
</dbReference>
<dbReference type="Proteomes" id="UP000000580">
    <property type="component" value="Chromosome"/>
</dbReference>
<dbReference type="GO" id="GO:0005737">
    <property type="term" value="C:cytoplasm"/>
    <property type="evidence" value="ECO:0007669"/>
    <property type="project" value="UniProtKB-SubCell"/>
</dbReference>
<dbReference type="GO" id="GO:0005524">
    <property type="term" value="F:ATP binding"/>
    <property type="evidence" value="ECO:0007669"/>
    <property type="project" value="UniProtKB-KW"/>
</dbReference>
<dbReference type="GO" id="GO:0004359">
    <property type="term" value="F:glutaminase activity"/>
    <property type="evidence" value="ECO:0007669"/>
    <property type="project" value="UniProtKB-EC"/>
</dbReference>
<dbReference type="GO" id="GO:0004642">
    <property type="term" value="F:phosphoribosylformylglycinamidine synthase activity"/>
    <property type="evidence" value="ECO:0007669"/>
    <property type="project" value="UniProtKB-UniRule"/>
</dbReference>
<dbReference type="GO" id="GO:0006189">
    <property type="term" value="P:'de novo' IMP biosynthetic process"/>
    <property type="evidence" value="ECO:0007669"/>
    <property type="project" value="UniProtKB-UniRule"/>
</dbReference>
<dbReference type="CDD" id="cd01740">
    <property type="entry name" value="GATase1_FGAR_AT"/>
    <property type="match status" value="1"/>
</dbReference>
<dbReference type="FunFam" id="3.40.50.880:FF:000019">
    <property type="entry name" value="Phosphoribosylformylglycinamidine synthase subunit PurQ"/>
    <property type="match status" value="1"/>
</dbReference>
<dbReference type="Gene3D" id="3.40.50.880">
    <property type="match status" value="1"/>
</dbReference>
<dbReference type="HAMAP" id="MF_00421">
    <property type="entry name" value="PurQ"/>
    <property type="match status" value="1"/>
</dbReference>
<dbReference type="InterPro" id="IPR029062">
    <property type="entry name" value="Class_I_gatase-like"/>
</dbReference>
<dbReference type="InterPro" id="IPR010075">
    <property type="entry name" value="PRibForGlyAmidine_synth_PurQ"/>
</dbReference>
<dbReference type="NCBIfam" id="TIGR01737">
    <property type="entry name" value="FGAM_synth_I"/>
    <property type="match status" value="1"/>
</dbReference>
<dbReference type="NCBIfam" id="NF002957">
    <property type="entry name" value="PRK03619.1"/>
    <property type="match status" value="1"/>
</dbReference>
<dbReference type="PANTHER" id="PTHR47552">
    <property type="entry name" value="PHOSPHORIBOSYLFORMYLGLYCINAMIDINE SYNTHASE SUBUNIT PURQ"/>
    <property type="match status" value="1"/>
</dbReference>
<dbReference type="PANTHER" id="PTHR47552:SF1">
    <property type="entry name" value="PHOSPHORIBOSYLFORMYLGLYCINAMIDINE SYNTHASE SUBUNIT PURQ"/>
    <property type="match status" value="1"/>
</dbReference>
<dbReference type="Pfam" id="PF13507">
    <property type="entry name" value="GATase_5"/>
    <property type="match status" value="1"/>
</dbReference>
<dbReference type="PIRSF" id="PIRSF001586">
    <property type="entry name" value="FGAM_synth_I"/>
    <property type="match status" value="1"/>
</dbReference>
<dbReference type="SMART" id="SM01211">
    <property type="entry name" value="GATase_5"/>
    <property type="match status" value="1"/>
</dbReference>
<dbReference type="SUPFAM" id="SSF52317">
    <property type="entry name" value="Class I glutamine amidotransferase-like"/>
    <property type="match status" value="1"/>
</dbReference>
<dbReference type="PROSITE" id="PS51273">
    <property type="entry name" value="GATASE_TYPE_1"/>
    <property type="match status" value="1"/>
</dbReference>
<feature type="chain" id="PRO_0000100571" description="Phosphoribosylformylglycinamidine synthase subunit PurQ">
    <location>
        <begin position="1"/>
        <end position="224"/>
    </location>
</feature>
<feature type="domain" description="Glutamine amidotransferase type-1" evidence="1">
    <location>
        <begin position="4"/>
        <end position="224"/>
    </location>
</feature>
<feature type="active site" description="Nucleophile" evidence="1">
    <location>
        <position position="87"/>
    </location>
</feature>
<feature type="active site" evidence="1">
    <location>
        <position position="195"/>
    </location>
</feature>
<feature type="active site" evidence="1">
    <location>
        <position position="197"/>
    </location>
</feature>
<name>PURQ_MYCPA</name>
<keyword id="KW-0067">ATP-binding</keyword>
<keyword id="KW-0963">Cytoplasm</keyword>
<keyword id="KW-0315">Glutamine amidotransferase</keyword>
<keyword id="KW-0378">Hydrolase</keyword>
<keyword id="KW-0436">Ligase</keyword>
<keyword id="KW-0547">Nucleotide-binding</keyword>
<keyword id="KW-0658">Purine biosynthesis</keyword>
<keyword id="KW-1185">Reference proteome</keyword>
<reference key="1">
    <citation type="journal article" date="2005" name="Proc. Natl. Acad. Sci. U.S.A.">
        <title>The complete genome sequence of Mycobacterium avium subspecies paratuberculosis.</title>
        <authorList>
            <person name="Li L."/>
            <person name="Bannantine J.P."/>
            <person name="Zhang Q."/>
            <person name="Amonsin A."/>
            <person name="May B.J."/>
            <person name="Alt D."/>
            <person name="Banerji N."/>
            <person name="Kanjilal S."/>
            <person name="Kapur V."/>
        </authorList>
    </citation>
    <scope>NUCLEOTIDE SEQUENCE [LARGE SCALE GENOMIC DNA]</scope>
    <source>
        <strain>ATCC BAA-968 / K-10</strain>
    </source>
</reference>
<accession>Q743F9</accession>
<protein>
    <recommendedName>
        <fullName evidence="1">Phosphoribosylformylglycinamidine synthase subunit PurQ</fullName>
        <shortName evidence="1">FGAM synthase</shortName>
        <ecNumber evidence="1">6.3.5.3</ecNumber>
    </recommendedName>
    <alternativeName>
        <fullName evidence="1">Formylglycinamide ribonucleotide amidotransferase subunit I</fullName>
        <shortName evidence="1">FGAR amidotransferase I</shortName>
        <shortName evidence="1">FGAR-AT I</shortName>
    </alternativeName>
    <alternativeName>
        <fullName evidence="1">Glutaminase PurQ</fullName>
        <ecNumber evidence="1">3.5.1.2</ecNumber>
    </alternativeName>
    <alternativeName>
        <fullName evidence="1">Phosphoribosylformylglycinamidine synthase subunit I</fullName>
    </alternativeName>
</protein>
<sequence>MTARIGIITFPGTLDDVDAARAARRVGAQPVSLWHADADLKGVDAVVVPGGFSYGDYLRAGAIARFAPVMTEVVDAARRGMPVLGICNGFQVLCEAGLLPGALTRNVGLHFICRDVWLRVASTSTAWTSRFEPDADLLVPLKSGEGRYVAPADVLDELEGEGRVVFRYHENLNGSQRDIAGVSSADGRVVGLMPHPEHAIEALTGPSDDGLGLFYSVLDGVLAG</sequence>